<feature type="chain" id="PRO_0000090357" description="Pancreatic lipase-related protein 2">
    <location>
        <begin position="1"/>
        <end position="434"/>
    </location>
</feature>
<feature type="domain" description="PLAT" evidence="5">
    <location>
        <begin position="322"/>
        <end position="434"/>
    </location>
</feature>
<feature type="region of interest" description="Required for galactolipase activity" evidence="2">
    <location>
        <begin position="76"/>
        <end position="88"/>
    </location>
</feature>
<feature type="region of interest" description="Required for galactolipase activity" evidence="2">
    <location>
        <begin position="240"/>
        <end position="244"/>
    </location>
</feature>
<feature type="active site" description="Nucleophile" evidence="2">
    <location>
        <position position="154"/>
    </location>
</feature>
<feature type="active site" description="Charge relay system" evidence="3 6">
    <location>
        <position position="178"/>
    </location>
</feature>
<feature type="active site" description="Charge relay system" evidence="3 6">
    <location>
        <position position="247"/>
    </location>
</feature>
<feature type="binding site" evidence="10 17">
    <location>
        <position position="189"/>
    </location>
    <ligand>
        <name>Ca(2+)</name>
        <dbReference type="ChEBI" id="CHEBI:29108"/>
    </ligand>
</feature>
<feature type="binding site" evidence="10 17">
    <location>
        <position position="192"/>
    </location>
    <ligand>
        <name>Ca(2+)</name>
        <dbReference type="ChEBI" id="CHEBI:29108"/>
    </ligand>
</feature>
<feature type="binding site" evidence="10 17">
    <location>
        <position position="194"/>
    </location>
    <ligand>
        <name>Ca(2+)</name>
        <dbReference type="ChEBI" id="CHEBI:29108"/>
    </ligand>
</feature>
<feature type="binding site" evidence="10 17">
    <location>
        <position position="197"/>
    </location>
    <ligand>
        <name>Ca(2+)</name>
        <dbReference type="ChEBI" id="CHEBI:29108"/>
    </ligand>
</feature>
<feature type="glycosylation site" description="N-linked (GlcNAc...) asparagine" evidence="2">
    <location>
        <position position="318"/>
    </location>
</feature>
<feature type="disulfide bond" evidence="3 5">
    <location>
        <begin position="4"/>
        <end position="10"/>
    </location>
</feature>
<feature type="disulfide bond" evidence="3 5">
    <location>
        <begin position="92"/>
        <end position="103"/>
    </location>
</feature>
<feature type="disulfide bond" evidence="3 5">
    <location>
        <begin position="239"/>
        <end position="245"/>
    </location>
</feature>
<feature type="disulfide bond" evidence="3 5">
    <location>
        <begin position="269"/>
        <end position="280"/>
    </location>
</feature>
<feature type="disulfide bond" evidence="3 5">
    <location>
        <begin position="283"/>
        <end position="288"/>
    </location>
</feature>
<feature type="disulfide bond" evidence="3 5">
    <location>
        <begin position="418"/>
        <end position="434"/>
    </location>
</feature>
<feature type="strand" evidence="18">
    <location>
        <begin position="2"/>
        <end position="5"/>
    </location>
</feature>
<feature type="helix" evidence="18">
    <location>
        <begin position="6"/>
        <end position="8"/>
    </location>
</feature>
<feature type="strand" evidence="18">
    <location>
        <begin position="9"/>
        <end position="12"/>
    </location>
</feature>
<feature type="strand" evidence="18">
    <location>
        <begin position="17"/>
        <end position="23"/>
    </location>
</feature>
<feature type="helix" evidence="18">
    <location>
        <begin position="32"/>
        <end position="35"/>
    </location>
</feature>
<feature type="strand" evidence="18">
    <location>
        <begin position="38"/>
        <end position="43"/>
    </location>
</feature>
<feature type="strand" evidence="18">
    <location>
        <begin position="46"/>
        <end position="53"/>
    </location>
</feature>
<feature type="helix" evidence="18">
    <location>
        <begin position="58"/>
        <end position="63"/>
    </location>
</feature>
<feature type="strand" evidence="18">
    <location>
        <begin position="70"/>
        <end position="76"/>
    </location>
</feature>
<feature type="helix" evidence="18">
    <location>
        <begin position="86"/>
        <end position="98"/>
    </location>
</feature>
<feature type="strand" evidence="18">
    <location>
        <begin position="101"/>
        <end position="107"/>
    </location>
</feature>
<feature type="helix" evidence="18">
    <location>
        <begin position="109"/>
        <end position="112"/>
    </location>
</feature>
<feature type="helix" evidence="18">
    <location>
        <begin position="116"/>
        <end position="141"/>
    </location>
</feature>
<feature type="helix" evidence="18">
    <location>
        <begin position="145"/>
        <end position="147"/>
    </location>
</feature>
<feature type="strand" evidence="18">
    <location>
        <begin position="148"/>
        <end position="153"/>
    </location>
</feature>
<feature type="helix" evidence="18">
    <location>
        <begin position="155"/>
        <end position="165"/>
    </location>
</feature>
<feature type="turn" evidence="18">
    <location>
        <begin position="166"/>
        <end position="169"/>
    </location>
</feature>
<feature type="strand" evidence="18">
    <location>
        <begin position="171"/>
        <end position="178"/>
    </location>
</feature>
<feature type="turn" evidence="18">
    <location>
        <begin position="182"/>
        <end position="186"/>
    </location>
</feature>
<feature type="turn" evidence="18">
    <location>
        <begin position="189"/>
        <end position="191"/>
    </location>
</feature>
<feature type="helix" evidence="18">
    <location>
        <begin position="195"/>
        <end position="197"/>
    </location>
</feature>
<feature type="strand" evidence="18">
    <location>
        <begin position="198"/>
        <end position="204"/>
    </location>
</feature>
<feature type="helix" evidence="18">
    <location>
        <begin position="211"/>
        <end position="214"/>
    </location>
</feature>
<feature type="strand" evidence="18">
    <location>
        <begin position="224"/>
        <end position="230"/>
    </location>
</feature>
<feature type="helix" evidence="18">
    <location>
        <begin position="231"/>
        <end position="233"/>
    </location>
</feature>
<feature type="helix" evidence="18">
    <location>
        <begin position="245"/>
        <end position="259"/>
    </location>
</feature>
<feature type="helix" evidence="18">
    <location>
        <begin position="261"/>
        <end position="264"/>
    </location>
</feature>
<feature type="helix" evidence="18">
    <location>
        <begin position="272"/>
        <end position="276"/>
    </location>
</feature>
<feature type="strand" evidence="18">
    <location>
        <begin position="290"/>
        <end position="292"/>
    </location>
</feature>
<feature type="helix" evidence="18">
    <location>
        <begin position="295"/>
        <end position="297"/>
    </location>
</feature>
<feature type="turn" evidence="18">
    <location>
        <begin position="299"/>
        <end position="302"/>
    </location>
</feature>
<feature type="strand" evidence="18">
    <location>
        <begin position="303"/>
        <end position="311"/>
    </location>
</feature>
<feature type="strand" evidence="18">
    <location>
        <begin position="322"/>
        <end position="326"/>
    </location>
</feature>
<sequence>AEVCYSHLGCFSDEKPWAGTSQRPIKSLPSDPKKINTRFLLYTNENQNSYQLITATDIATIKASNFNLNRKTRFIIHGFTDSGENSWLSDMCKNMFQVEKVNCICVDWKGGSKAQYSQASQNIRVVGAEVAYLVQVLSTSLNYAPENVHIIGHSLGAHTAGEAGKRLNGLVGRITGLDPAEPYFQDTPEEVRLDPSDAKFVDVIHTDISPILPSLGFGMSQKVGHMDFFPNGGKDMPGCKTGISCNHHRSIEYYHSSILNPEGFLGYPCASYDEFQESGCFPCPAKGCPKMGHFADQYPGKTNAVEQTFFLNTGASDNFTRWRYKVTVTLSGEKDPSGNINVALLGKNGNSAQYQVFKGTLKPDASYTNSIDVELNVGTIQKVTFLWKRSGISVSKPKMGASRITVQSGKDGTKYNFCSSDIVQENVEQTLSPC</sequence>
<comment type="function">
    <text evidence="1 2 3 7 8 9 10">Lipase that primarily hydrolyzes triglycerides and galactosylglycerides (PubMed:17401110, PubMed:20083229, PubMed:8490016, PubMed:8939760). In neonates, may play a major role in pancreatic digestion of dietary fats such as milk fat globules enriched in long-chain triglycerides (By similarity). Hydrolyzes short-, medium- and long-chain fatty acyls in triglycerides without apparent positional specificity (PubMed:8490016, PubMed:8939760). Can completely deacylate triacylglycerols (By similarity). When the liver matures and bile salt synthesis increases, likely functions mainly as a galactolipase and monoacylglycerol lipase. Hydrolyzes monogalactosyldiglycerols (MGDG) and digalactosyldiacylglycerols (DGDG) present in a plant-based diet, releasing long-chain polyunsaturated fatty acids (PubMed:20083229, PubMed:8939760). Hydrolyzes medium- and long-chain fatty acyls in galactolipids. May act together with LIPF to hydrolyze partially digested triglycerides (By similarity). Hydrolyzes long-chain monoglycerides with high efficiency. In cytotoxic T cells, contributes to perforin-dependent cell lysis, but is unlikely to mediate direct cytotoxicity (By similarity). Also has low phospholipase activity (By similarity). In neurons, required for the localization of the phospholipid 1-oleoyl-2-palmitoyl-PC (OPPC) to neurite tips through acyl chain remodeling of membrane phospholipids (By similarity). The resulting OPPC-rich lipid membrane domain recruits the t-SNARE protein STX4 by selectively interacting with the STX4 transmembrane domain and this promotes surface expression of the dopamine transporter SLC6A3/DAT at neurite tips by facilitating fusion of SLC6A3-containing transport vesicles with the plasma membrane (By similarity).</text>
</comment>
<comment type="catalytic activity">
    <reaction evidence="9 10">
        <text>a triacylglycerol + H2O = a diacylglycerol + a fatty acid + H(+)</text>
        <dbReference type="Rhea" id="RHEA:12044"/>
        <dbReference type="ChEBI" id="CHEBI:15377"/>
        <dbReference type="ChEBI" id="CHEBI:15378"/>
        <dbReference type="ChEBI" id="CHEBI:17855"/>
        <dbReference type="ChEBI" id="CHEBI:18035"/>
        <dbReference type="ChEBI" id="CHEBI:28868"/>
        <dbReference type="EC" id="3.1.1.3"/>
    </reaction>
    <physiologicalReaction direction="left-to-right" evidence="15 16">
        <dbReference type="Rhea" id="RHEA:12045"/>
    </physiologicalReaction>
</comment>
<comment type="catalytic activity">
    <reaction evidence="8 10">
        <text>a 1,2-diacyl-3-O-(beta-D-galactosyl)-sn-glycerol + 2 H2O = 3-beta-D-galactosyl-sn-glycerol + 2 a fatty acid + 2 H(+)</text>
        <dbReference type="Rhea" id="RHEA:13189"/>
        <dbReference type="ChEBI" id="CHEBI:15377"/>
        <dbReference type="ChEBI" id="CHEBI:15378"/>
        <dbReference type="ChEBI" id="CHEBI:15754"/>
        <dbReference type="ChEBI" id="CHEBI:17615"/>
        <dbReference type="ChEBI" id="CHEBI:28868"/>
        <dbReference type="EC" id="3.1.1.26"/>
    </reaction>
    <physiologicalReaction direction="left-to-right" evidence="14 16">
        <dbReference type="Rhea" id="RHEA:13190"/>
    </physiologicalReaction>
</comment>
<comment type="catalytic activity">
    <reaction evidence="2">
        <text>1,2,3-tri-(9Z-octadecenoyl)-glycerol + H2O = di-(9Z)-octadecenoylglycerol + (9Z)-octadecenoate + H(+)</text>
        <dbReference type="Rhea" id="RHEA:38575"/>
        <dbReference type="ChEBI" id="CHEBI:15377"/>
        <dbReference type="ChEBI" id="CHEBI:15378"/>
        <dbReference type="ChEBI" id="CHEBI:30823"/>
        <dbReference type="ChEBI" id="CHEBI:53753"/>
        <dbReference type="ChEBI" id="CHEBI:75945"/>
    </reaction>
    <physiologicalReaction direction="left-to-right" evidence="2">
        <dbReference type="Rhea" id="RHEA:38576"/>
    </physiologicalReaction>
</comment>
<comment type="catalytic activity">
    <reaction evidence="2">
        <text>di-(9Z)-octadecenoylglycerol + H2O = (9Z-octadecenoyl)-glycerol + (9Z)-octadecenoate + H(+)</text>
        <dbReference type="Rhea" id="RHEA:47868"/>
        <dbReference type="ChEBI" id="CHEBI:15377"/>
        <dbReference type="ChEBI" id="CHEBI:15378"/>
        <dbReference type="ChEBI" id="CHEBI:30823"/>
        <dbReference type="ChEBI" id="CHEBI:75937"/>
        <dbReference type="ChEBI" id="CHEBI:75945"/>
    </reaction>
    <physiologicalReaction direction="left-to-right" evidence="2">
        <dbReference type="Rhea" id="RHEA:47869"/>
    </physiologicalReaction>
</comment>
<comment type="catalytic activity">
    <reaction evidence="2">
        <text>(9Z-octadecenoyl)-glycerol + H2O = glycerol + (9Z)-octadecenoate + H(+)</text>
        <dbReference type="Rhea" id="RHEA:39955"/>
        <dbReference type="ChEBI" id="CHEBI:15377"/>
        <dbReference type="ChEBI" id="CHEBI:15378"/>
        <dbReference type="ChEBI" id="CHEBI:17754"/>
        <dbReference type="ChEBI" id="CHEBI:30823"/>
        <dbReference type="ChEBI" id="CHEBI:75937"/>
    </reaction>
    <physiologicalReaction direction="left-to-right" evidence="2">
        <dbReference type="Rhea" id="RHEA:39956"/>
    </physiologicalReaction>
</comment>
<comment type="catalytic activity">
    <reaction evidence="2">
        <text>1-(9Z-octadecenoyl)-glycerol + H2O = glycerol + (9Z)-octadecenoate + H(+)</text>
        <dbReference type="Rhea" id="RHEA:38487"/>
        <dbReference type="ChEBI" id="CHEBI:15377"/>
        <dbReference type="ChEBI" id="CHEBI:15378"/>
        <dbReference type="ChEBI" id="CHEBI:17754"/>
        <dbReference type="ChEBI" id="CHEBI:30823"/>
        <dbReference type="ChEBI" id="CHEBI:75342"/>
    </reaction>
    <physiologicalReaction direction="left-to-right" evidence="2">
        <dbReference type="Rhea" id="RHEA:38488"/>
    </physiologicalReaction>
</comment>
<comment type="catalytic activity">
    <reaction evidence="2">
        <text>1,2,3-tripropanoylglycerol + H2O = dipropanoylglycerol + propanoate + H(+)</text>
        <dbReference type="Rhea" id="RHEA:48024"/>
        <dbReference type="ChEBI" id="CHEBI:15377"/>
        <dbReference type="ChEBI" id="CHEBI:15378"/>
        <dbReference type="ChEBI" id="CHEBI:17272"/>
        <dbReference type="ChEBI" id="CHEBI:88153"/>
        <dbReference type="ChEBI" id="CHEBI:88155"/>
    </reaction>
    <physiologicalReaction direction="left-to-right" evidence="2">
        <dbReference type="Rhea" id="RHEA:48025"/>
    </physiologicalReaction>
</comment>
<comment type="catalytic activity">
    <reaction evidence="10">
        <text>1,2,3-tributanoylglycerol + H2O = dibutanoylglycerol + butanoate + H(+)</text>
        <dbReference type="Rhea" id="RHEA:40475"/>
        <dbReference type="ChEBI" id="CHEBI:15377"/>
        <dbReference type="ChEBI" id="CHEBI:15378"/>
        <dbReference type="ChEBI" id="CHEBI:17968"/>
        <dbReference type="ChEBI" id="CHEBI:35020"/>
        <dbReference type="ChEBI" id="CHEBI:76478"/>
    </reaction>
    <physiologicalReaction direction="left-to-right" evidence="16">
        <dbReference type="Rhea" id="RHEA:40476"/>
    </physiologicalReaction>
</comment>
<comment type="catalytic activity">
    <reaction evidence="2">
        <text>1,2,3-trioctanoylglycerol + H2O = dioctanoylglycerol + octanoate + H(+)</text>
        <dbReference type="Rhea" id="RHEA:47864"/>
        <dbReference type="ChEBI" id="CHEBI:15377"/>
        <dbReference type="ChEBI" id="CHEBI:15378"/>
        <dbReference type="ChEBI" id="CHEBI:25646"/>
        <dbReference type="ChEBI" id="CHEBI:76978"/>
        <dbReference type="ChEBI" id="CHEBI:88066"/>
    </reaction>
    <physiologicalReaction direction="left-to-right" evidence="2">
        <dbReference type="Rhea" id="RHEA:47865"/>
    </physiologicalReaction>
</comment>
<comment type="catalytic activity">
    <reaction evidence="2">
        <text>1,2-didecanoylglycerol + H2O = decanoylglycerol + decanoate + H(+)</text>
        <dbReference type="Rhea" id="RHEA:48596"/>
        <dbReference type="ChEBI" id="CHEBI:11152"/>
        <dbReference type="ChEBI" id="CHEBI:15377"/>
        <dbReference type="ChEBI" id="CHEBI:15378"/>
        <dbReference type="ChEBI" id="CHEBI:27689"/>
        <dbReference type="ChEBI" id="CHEBI:90605"/>
    </reaction>
    <physiologicalReaction direction="left-to-right" evidence="2">
        <dbReference type="Rhea" id="RHEA:48597"/>
    </physiologicalReaction>
</comment>
<comment type="catalytic activity">
    <reaction evidence="8 10">
        <text>long chain 1,2-diacyl-3-O-beta-D-galactosyl-sn-glycerol + H2O = long chain acyl-3-O-beta-D-galactosyl-sn-glycerol + a fatty acid + H(+)</text>
        <dbReference type="Rhea" id="RHEA:48700"/>
        <dbReference type="ChEBI" id="CHEBI:15377"/>
        <dbReference type="ChEBI" id="CHEBI:15378"/>
        <dbReference type="ChEBI" id="CHEBI:28868"/>
        <dbReference type="ChEBI" id="CHEBI:90477"/>
        <dbReference type="ChEBI" id="CHEBI:90770"/>
    </reaction>
    <physiologicalReaction direction="left-to-right" evidence="14 16">
        <dbReference type="Rhea" id="RHEA:48701"/>
    </physiologicalReaction>
</comment>
<comment type="catalytic activity">
    <reaction evidence="8">
        <text>1,2-dioctanoyl-3-O-beta-D-galactosyl-sn-glycerol + H2O = octanoyl-3-(beta-D-galactosyl)-sn-glycerol + octanoate + H(+)</text>
        <dbReference type="Rhea" id="RHEA:48696"/>
        <dbReference type="ChEBI" id="CHEBI:15377"/>
        <dbReference type="ChEBI" id="CHEBI:15378"/>
        <dbReference type="ChEBI" id="CHEBI:25646"/>
        <dbReference type="ChEBI" id="CHEBI:90453"/>
        <dbReference type="ChEBI" id="CHEBI:90769"/>
    </reaction>
    <physiologicalReaction direction="left-to-right" evidence="14">
        <dbReference type="Rhea" id="RHEA:48697"/>
    </physiologicalReaction>
</comment>
<comment type="catalytic activity">
    <reaction evidence="2">
        <text>1,2-didodecanoyl-3-beta-D-galactosyl-sn-glycerol + H2O = dodecanoyl-3-beta-D-galactosyl-sn-glycerol + dodecanoate + H(+)</text>
        <dbReference type="Rhea" id="RHEA:48540"/>
        <dbReference type="ChEBI" id="CHEBI:15377"/>
        <dbReference type="ChEBI" id="CHEBI:15378"/>
        <dbReference type="ChEBI" id="CHEBI:18262"/>
        <dbReference type="ChEBI" id="CHEBI:90340"/>
        <dbReference type="ChEBI" id="CHEBI:90515"/>
    </reaction>
    <physiologicalReaction direction="left-to-right" evidence="2">
        <dbReference type="Rhea" id="RHEA:48541"/>
    </physiologicalReaction>
</comment>
<comment type="catalytic activity">
    <reaction evidence="2">
        <text>1-beta-D-galactosyl-2,3-didodecanoyl-sn-glycerol + H2O = 1-beta-D-galactosyl-dodecanoyl-sn-glycerol + dodecanoate + H(+)</text>
        <dbReference type="Rhea" id="RHEA:48536"/>
        <dbReference type="ChEBI" id="CHEBI:15377"/>
        <dbReference type="ChEBI" id="CHEBI:15378"/>
        <dbReference type="ChEBI" id="CHEBI:18262"/>
        <dbReference type="ChEBI" id="CHEBI:90342"/>
        <dbReference type="ChEBI" id="CHEBI:90514"/>
    </reaction>
    <physiologicalReaction direction="left-to-right" evidence="2">
        <dbReference type="Rhea" id="RHEA:48537"/>
    </physiologicalReaction>
</comment>
<comment type="catalytic activity">
    <reaction evidence="2">
        <text>a 1,2-diacyl-3-O-[alpha-D-galactosyl-(1-&gt;6)-beta-D-galactosyl]-sn-glycerol + H2O = acyl-3-O-[alpha-D-galactosyl-(1-&gt;6)-beta-D-galactosyl]-sn-glycerol + a fatty acid + H(+)</text>
        <dbReference type="Rhea" id="RHEA:48372"/>
        <dbReference type="ChEBI" id="CHEBI:15377"/>
        <dbReference type="ChEBI" id="CHEBI:15378"/>
        <dbReference type="ChEBI" id="CHEBI:28396"/>
        <dbReference type="ChEBI" id="CHEBI:28868"/>
        <dbReference type="ChEBI" id="CHEBI:90310"/>
    </reaction>
    <physiologicalReaction direction="left-to-right" evidence="2">
        <dbReference type="Rhea" id="RHEA:48373"/>
    </physiologicalReaction>
</comment>
<comment type="catalytic activity">
    <reaction evidence="8">
        <text>long chain 1,2-diacyl-3-O-[alpha-D-galactosyl-(1-&gt;6)-beta-D-galactosyl]-sn-glycerol + H2O = long chain acyl-3-O-[alpha-D-galactosyl-(1-&gt;6)-beta-D-galactosyl]-sn-glycerol + a fatty acid + H(+)</text>
        <dbReference type="Rhea" id="RHEA:48708"/>
        <dbReference type="ChEBI" id="CHEBI:15377"/>
        <dbReference type="ChEBI" id="CHEBI:15378"/>
        <dbReference type="ChEBI" id="CHEBI:28868"/>
        <dbReference type="ChEBI" id="CHEBI:90463"/>
        <dbReference type="ChEBI" id="CHEBI:90774"/>
    </reaction>
    <physiologicalReaction direction="left-to-right" evidence="14">
        <dbReference type="Rhea" id="RHEA:48709"/>
    </physiologicalReaction>
</comment>
<comment type="catalytic activity">
    <reaction evidence="8">
        <text>1,2-dioctanoyl-3-O-[alpha-D-galactosyl-(1-&gt;6)-beta-D-galactosyl]-sn-glycerol + H2O = octanoyl-3-O-[alpha-D-galactosyl-(1-&gt;6)-beta-D-galactosyl]-sn-glycerol + octanoate + H(+)</text>
        <dbReference type="Rhea" id="RHEA:48692"/>
        <dbReference type="ChEBI" id="CHEBI:15377"/>
        <dbReference type="ChEBI" id="CHEBI:15378"/>
        <dbReference type="ChEBI" id="CHEBI:25646"/>
        <dbReference type="ChEBI" id="CHEBI:90457"/>
        <dbReference type="ChEBI" id="CHEBI:90768"/>
    </reaction>
    <physiologicalReaction direction="left-to-right" evidence="14">
        <dbReference type="Rhea" id="RHEA:48693"/>
    </physiologicalReaction>
</comment>
<comment type="catalytic activity">
    <reaction evidence="7">
        <text>1,2-didodecanoyl-3-O-[alpha-D-galactosyl-(1-&gt;6)-beta-D-galactosyl]-sn-glycerol + H2O = dodecanoyl-3-O-[alpha-D-galactosyl-(1-&gt;6)-beta-D-galactosyl]-sn-glycerol + dodecanoate + H(+)</text>
        <dbReference type="Rhea" id="RHEA:48516"/>
        <dbReference type="ChEBI" id="CHEBI:15377"/>
        <dbReference type="ChEBI" id="CHEBI:15378"/>
        <dbReference type="ChEBI" id="CHEBI:18262"/>
        <dbReference type="ChEBI" id="CHEBI:90337"/>
        <dbReference type="ChEBI" id="CHEBI:90359"/>
    </reaction>
    <physiologicalReaction direction="left-to-right" evidence="13">
        <dbReference type="Rhea" id="RHEA:48517"/>
    </physiologicalReaction>
</comment>
<comment type="catalytic activity">
    <reaction evidence="10">
        <text>a 1,2-diacyl-sn-glycero-3-phosphocholine + H2O = a monoacyl-sn-glycero-3-phosphocholine + a fatty acid + H(+)</text>
        <dbReference type="Rhea" id="RHEA:44664"/>
        <dbReference type="ChEBI" id="CHEBI:15377"/>
        <dbReference type="ChEBI" id="CHEBI:15378"/>
        <dbReference type="ChEBI" id="CHEBI:28868"/>
        <dbReference type="ChEBI" id="CHEBI:57643"/>
        <dbReference type="ChEBI" id="CHEBI:84465"/>
    </reaction>
    <physiologicalReaction direction="left-to-right" evidence="16">
        <dbReference type="Rhea" id="RHEA:44665"/>
    </physiologicalReaction>
</comment>
<comment type="activity regulation">
    <text evidence="9">CLPS stimulates triacylglycerol lipase activity. Not inhibited by bile salts.</text>
</comment>
<comment type="pathway">
    <text evidence="2">Glycerolipid metabolism; triacylglycerol degradation.</text>
</comment>
<comment type="pathway">
    <text evidence="2">Glycolipid metabolism.</text>
</comment>
<comment type="subcellular location">
    <subcellularLocation>
        <location evidence="2">Secreted</location>
    </subcellularLocation>
    <subcellularLocation>
        <location evidence="3">Zymogen granule membrane</location>
        <topology evidence="3">Peripheral membrane protein</topology>
    </subcellularLocation>
    <subcellularLocation>
        <location evidence="3">Cell projection</location>
        <location evidence="3">Neuron projection</location>
    </subcellularLocation>
    <text evidence="3">Localizes to neurite tips in neuronal cells.</text>
</comment>
<comment type="tissue specificity">
    <text evidence="9">Pancreas.</text>
</comment>
<comment type="similarity">
    <text evidence="4">Belongs to the AB hydrolase superfamily. Lipase family.</text>
</comment>
<evidence type="ECO:0000250" key="1">
    <source>
        <dbReference type="UniProtKB" id="P17892"/>
    </source>
</evidence>
<evidence type="ECO:0000250" key="2">
    <source>
        <dbReference type="UniProtKB" id="P54317"/>
    </source>
</evidence>
<evidence type="ECO:0000250" key="3">
    <source>
        <dbReference type="UniProtKB" id="P54318"/>
    </source>
</evidence>
<evidence type="ECO:0000255" key="4"/>
<evidence type="ECO:0000255" key="5">
    <source>
        <dbReference type="PROSITE-ProRule" id="PRU00152"/>
    </source>
</evidence>
<evidence type="ECO:0000255" key="6">
    <source>
        <dbReference type="PROSITE-ProRule" id="PRU10037"/>
    </source>
</evidence>
<evidence type="ECO:0000269" key="7">
    <source>
    </source>
</evidence>
<evidence type="ECO:0000269" key="8">
    <source>
    </source>
</evidence>
<evidence type="ECO:0000269" key="9">
    <source>
    </source>
</evidence>
<evidence type="ECO:0000269" key="10">
    <source>
    </source>
</evidence>
<evidence type="ECO:0000303" key="11">
    <source>
    </source>
</evidence>
<evidence type="ECO:0000305" key="12"/>
<evidence type="ECO:0000305" key="13">
    <source>
    </source>
</evidence>
<evidence type="ECO:0000305" key="14">
    <source>
    </source>
</evidence>
<evidence type="ECO:0000305" key="15">
    <source>
    </source>
</evidence>
<evidence type="ECO:0000305" key="16">
    <source>
    </source>
</evidence>
<evidence type="ECO:0007744" key="17">
    <source>
        <dbReference type="PDB" id="1GPL"/>
    </source>
</evidence>
<evidence type="ECO:0007829" key="18">
    <source>
        <dbReference type="PDB" id="1GPL"/>
    </source>
</evidence>
<keyword id="KW-0002">3D-structure</keyword>
<keyword id="KW-0106">Calcium</keyword>
<keyword id="KW-0966">Cell projection</keyword>
<keyword id="KW-0968">Cytoplasmic vesicle</keyword>
<keyword id="KW-0903">Direct protein sequencing</keyword>
<keyword id="KW-1015">Disulfide bond</keyword>
<keyword id="KW-0325">Glycoprotein</keyword>
<keyword id="KW-0378">Hydrolase</keyword>
<keyword id="KW-0442">Lipid degradation</keyword>
<keyword id="KW-0443">Lipid metabolism</keyword>
<keyword id="KW-0472">Membrane</keyword>
<keyword id="KW-0479">Metal-binding</keyword>
<keyword id="KW-1185">Reference proteome</keyword>
<keyword id="KW-0964">Secreted</keyword>
<accession>P81139</accession>
<name>LIPR2_CAVPO</name>
<proteinExistence type="evidence at protein level"/>
<gene>
    <name evidence="2" type="primary">PNLIPRP2</name>
</gene>
<protein>
    <recommendedName>
        <fullName evidence="2">Pancreatic lipase-related protein 2</fullName>
        <shortName evidence="2">PL-RP2</shortName>
    </recommendedName>
    <alternativeName>
        <fullName evidence="1">Cytotoxic T lymphocyte lipase</fullName>
    </alternativeName>
    <alternativeName>
        <fullName evidence="11">GPL</fullName>
    </alternativeName>
    <alternativeName>
        <fullName>Galactolipase</fullName>
        <ecNumber evidence="8 10">3.1.1.26</ecNumber>
    </alternativeName>
    <alternativeName>
        <fullName>Triacylglycerol lipase</fullName>
        <ecNumber evidence="9 10">3.1.1.3</ecNumber>
    </alternativeName>
</protein>
<dbReference type="EC" id="3.1.1.26" evidence="8 10"/>
<dbReference type="EC" id="3.1.1.3" evidence="9 10"/>
<dbReference type="PIR" id="A49488">
    <property type="entry name" value="A49488"/>
</dbReference>
<dbReference type="PDB" id="1GPL">
    <property type="method" value="X-ray"/>
    <property type="resolution" value="2.01 A"/>
    <property type="chains" value="A=1-434"/>
</dbReference>
<dbReference type="PDBsum" id="1GPL"/>
<dbReference type="SMR" id="P81139"/>
<dbReference type="FunCoup" id="P81139">
    <property type="interactions" value="96"/>
</dbReference>
<dbReference type="STRING" id="10141.ENSCPOP00000002787"/>
<dbReference type="ChEMBL" id="CHEMBL2169729"/>
<dbReference type="SwissLipids" id="SLP:000001439"/>
<dbReference type="ESTHER" id="cavpo-2plrp">
    <property type="family name" value="Pancreatic_lipase"/>
</dbReference>
<dbReference type="GlyCosmos" id="P81139">
    <property type="glycosylation" value="1 site, No reported glycans"/>
</dbReference>
<dbReference type="eggNOG" id="ENOG502QUK7">
    <property type="taxonomic scope" value="Eukaryota"/>
</dbReference>
<dbReference type="InParanoid" id="P81139"/>
<dbReference type="BRENDA" id="3.1.1.26">
    <property type="organism ID" value="1225"/>
</dbReference>
<dbReference type="SABIO-RK" id="P81139"/>
<dbReference type="UniPathway" id="UPA00256"/>
<dbReference type="Proteomes" id="UP000005447">
    <property type="component" value="Unassembled WGS sequence"/>
</dbReference>
<dbReference type="GO" id="GO:0005615">
    <property type="term" value="C:extracellular space"/>
    <property type="evidence" value="ECO:0000250"/>
    <property type="project" value="UniProtKB"/>
</dbReference>
<dbReference type="GO" id="GO:0043005">
    <property type="term" value="C:neuron projection"/>
    <property type="evidence" value="ECO:0000250"/>
    <property type="project" value="UniProtKB"/>
</dbReference>
<dbReference type="GO" id="GO:0042589">
    <property type="term" value="C:zymogen granule membrane"/>
    <property type="evidence" value="ECO:0007669"/>
    <property type="project" value="UniProtKB-SubCell"/>
</dbReference>
<dbReference type="GO" id="GO:0005509">
    <property type="term" value="F:calcium ion binding"/>
    <property type="evidence" value="ECO:0000314"/>
    <property type="project" value="UniProtKB"/>
</dbReference>
<dbReference type="GO" id="GO:0047714">
    <property type="term" value="F:galactolipase activity"/>
    <property type="evidence" value="ECO:0000314"/>
    <property type="project" value="UniProtKB"/>
</dbReference>
<dbReference type="GO" id="GO:0004465">
    <property type="term" value="F:lipoprotein lipase activity"/>
    <property type="evidence" value="ECO:0007669"/>
    <property type="project" value="TreeGrafter"/>
</dbReference>
<dbReference type="GO" id="GO:0047372">
    <property type="term" value="F:monoacylglycerol lipase activity"/>
    <property type="evidence" value="ECO:0000250"/>
    <property type="project" value="UniProtKB"/>
</dbReference>
<dbReference type="GO" id="GO:0004620">
    <property type="term" value="F:phospholipase activity"/>
    <property type="evidence" value="ECO:0000314"/>
    <property type="project" value="UniProtKB"/>
</dbReference>
<dbReference type="GO" id="GO:0004806">
    <property type="term" value="F:triacylglycerol lipase activity"/>
    <property type="evidence" value="ECO:0000314"/>
    <property type="project" value="UniProtKB"/>
</dbReference>
<dbReference type="GO" id="GO:0019376">
    <property type="term" value="P:galactolipid catabolic process"/>
    <property type="evidence" value="ECO:0000314"/>
    <property type="project" value="UniProtKB"/>
</dbReference>
<dbReference type="GO" id="GO:0006629">
    <property type="term" value="P:lipid metabolic process"/>
    <property type="evidence" value="ECO:0000314"/>
    <property type="project" value="UniProtKB"/>
</dbReference>
<dbReference type="GO" id="GO:0009395">
    <property type="term" value="P:phospholipid catabolic process"/>
    <property type="evidence" value="ECO:0000250"/>
    <property type="project" value="UniProtKB"/>
</dbReference>
<dbReference type="GO" id="GO:0006644">
    <property type="term" value="P:phospholipid metabolic process"/>
    <property type="evidence" value="ECO:0000250"/>
    <property type="project" value="UniProtKB"/>
</dbReference>
<dbReference type="GO" id="GO:0019433">
    <property type="term" value="P:triglyceride catabolic process"/>
    <property type="evidence" value="ECO:0007669"/>
    <property type="project" value="UniProtKB-UniPathway"/>
</dbReference>
<dbReference type="CDD" id="cd00707">
    <property type="entry name" value="Pancreat_lipase_like"/>
    <property type="match status" value="1"/>
</dbReference>
<dbReference type="FunFam" id="3.40.50.1820:FF:000033">
    <property type="entry name" value="Pancreatic triacylglycerol lipase"/>
    <property type="match status" value="1"/>
</dbReference>
<dbReference type="FunFam" id="2.60.60.20:FF:000003">
    <property type="entry name" value="Triacylglycerol lipase"/>
    <property type="match status" value="1"/>
</dbReference>
<dbReference type="Gene3D" id="3.40.50.1820">
    <property type="entry name" value="alpha/beta hydrolase"/>
    <property type="match status" value="1"/>
</dbReference>
<dbReference type="Gene3D" id="2.60.60.20">
    <property type="entry name" value="PLAT/LH2 domain"/>
    <property type="match status" value="1"/>
</dbReference>
<dbReference type="InterPro" id="IPR029058">
    <property type="entry name" value="AB_hydrolase_fold"/>
</dbReference>
<dbReference type="InterPro" id="IPR013818">
    <property type="entry name" value="Lipase"/>
</dbReference>
<dbReference type="InterPro" id="IPR016272">
    <property type="entry name" value="Lipase_LIPH"/>
</dbReference>
<dbReference type="InterPro" id="IPR033906">
    <property type="entry name" value="Lipase_N"/>
</dbReference>
<dbReference type="InterPro" id="IPR002331">
    <property type="entry name" value="Lipase_panc"/>
</dbReference>
<dbReference type="InterPro" id="IPR001024">
    <property type="entry name" value="PLAT/LH2_dom"/>
</dbReference>
<dbReference type="InterPro" id="IPR036392">
    <property type="entry name" value="PLAT/LH2_dom_sf"/>
</dbReference>
<dbReference type="InterPro" id="IPR000734">
    <property type="entry name" value="TAG_lipase"/>
</dbReference>
<dbReference type="PANTHER" id="PTHR11610">
    <property type="entry name" value="LIPASE"/>
    <property type="match status" value="1"/>
</dbReference>
<dbReference type="PANTHER" id="PTHR11610:SF165">
    <property type="entry name" value="PANCREATIC LIPASE-RELATED PROTEIN 2"/>
    <property type="match status" value="1"/>
</dbReference>
<dbReference type="Pfam" id="PF00151">
    <property type="entry name" value="Lipase"/>
    <property type="match status" value="1"/>
</dbReference>
<dbReference type="Pfam" id="PF01477">
    <property type="entry name" value="PLAT"/>
    <property type="match status" value="1"/>
</dbReference>
<dbReference type="PIRSF" id="PIRSF000865">
    <property type="entry name" value="Lipoprotein_lipase_LIPH"/>
    <property type="match status" value="1"/>
</dbReference>
<dbReference type="PRINTS" id="PR00823">
    <property type="entry name" value="PANCLIPASE"/>
</dbReference>
<dbReference type="PRINTS" id="PR00821">
    <property type="entry name" value="TAGLIPASE"/>
</dbReference>
<dbReference type="SMART" id="SM00308">
    <property type="entry name" value="LH2"/>
    <property type="match status" value="1"/>
</dbReference>
<dbReference type="SUPFAM" id="SSF53474">
    <property type="entry name" value="alpha/beta-Hydrolases"/>
    <property type="match status" value="1"/>
</dbReference>
<dbReference type="SUPFAM" id="SSF49723">
    <property type="entry name" value="Lipase/lipooxygenase domain (PLAT/LH2 domain)"/>
    <property type="match status" value="1"/>
</dbReference>
<dbReference type="PROSITE" id="PS00120">
    <property type="entry name" value="LIPASE_SER"/>
    <property type="match status" value="1"/>
</dbReference>
<dbReference type="PROSITE" id="PS50095">
    <property type="entry name" value="PLAT"/>
    <property type="match status" value="1"/>
</dbReference>
<reference evidence="12" key="1">
    <citation type="journal article" date="1993" name="Biochemistry">
        <title>A structural domain (the lid) found in pancreatic lipases is absent in the guinea pig (phospho)lipase.</title>
        <authorList>
            <person name="Hjorth A."/>
            <person name="Carriere F."/>
            <person name="Cudrey C."/>
            <person name="Woldike H."/>
            <person name="Boel E."/>
            <person name="Lawson D.M."/>
            <person name="Ferrato F."/>
            <person name="Cambillau C."/>
            <person name="Dodson G.G."/>
            <person name="Thim L."/>
            <person name="Verger R."/>
        </authorList>
    </citation>
    <scope>NUCLEOTIDE SEQUENCE [MRNA]</scope>
    <scope>PROTEIN SEQUENCE OF 1-23 AND 415-432</scope>
    <scope>CATALYTIC ACTIVITY</scope>
    <scope>ACTIVITY REGULATION</scope>
    <scope>TISSUE SPECIFICITY</scope>
    <source>
        <tissue evidence="9">Pancreas</tissue>
    </source>
</reference>
<reference key="2">
    <citation type="journal article" date="2007" name="J. Lipid Res.">
        <title>Further biochemical characterization of human pancreatic lipase-related protein 2 expressed in yeast cells.</title>
        <authorList>
            <person name="Eydoux C."/>
            <person name="De Caro J."/>
            <person name="Ferrato F."/>
            <person name="Boullanger P."/>
            <person name="Lafont D."/>
            <person name="Laugier R."/>
            <person name="Carriere F."/>
            <person name="De Caro A."/>
        </authorList>
    </citation>
    <scope>FUNCTION</scope>
    <scope>CATALYTIC ACTIVITY</scope>
</reference>
<reference key="3">
    <citation type="journal article" date="2010" name="Biochim. Biophys. Acta">
        <title>Lipolysis of natural long chain and synthetic medium chain galactolipids by pancreatic lipase-related protein 2.</title>
        <authorList>
            <person name="Amara S."/>
            <person name="Barouh N."/>
            <person name="Lecomte J."/>
            <person name="Lafont D."/>
            <person name="Robert S."/>
            <person name="Villeneuve P."/>
            <person name="De Caro A."/>
            <person name="Carriere F."/>
        </authorList>
    </citation>
    <scope>FUNCTION</scope>
    <scope>CATALYTIC ACTIVITY</scope>
</reference>
<reference key="4">
    <citation type="journal article" date="1996" name="Structure">
        <title>A pancreatic lipase with a phospholipase A1 activity: crystal structure of a chimeric pancreatic lipase-related protein 2 from guinea pig.</title>
        <authorList>
            <person name="Withers-Martinez C."/>
            <person name="Carriere F."/>
            <person name="Verger R."/>
            <person name="Bourgeois D."/>
            <person name="Cambillau C."/>
        </authorList>
    </citation>
    <scope>X-RAY CRYSTALLOGRAPHY (2.01 ANGSTROMS) OF 1-326 IN COMPLEX WITH CALCIUM</scope>
    <scope>FUNCTION</scope>
    <scope>CATALYTIC ACTIVITY</scope>
</reference>
<organism>
    <name type="scientific">Cavia porcellus</name>
    <name type="common">Guinea pig</name>
    <dbReference type="NCBI Taxonomy" id="10141"/>
    <lineage>
        <taxon>Eukaryota</taxon>
        <taxon>Metazoa</taxon>
        <taxon>Chordata</taxon>
        <taxon>Craniata</taxon>
        <taxon>Vertebrata</taxon>
        <taxon>Euteleostomi</taxon>
        <taxon>Mammalia</taxon>
        <taxon>Eutheria</taxon>
        <taxon>Euarchontoglires</taxon>
        <taxon>Glires</taxon>
        <taxon>Rodentia</taxon>
        <taxon>Hystricomorpha</taxon>
        <taxon>Caviidae</taxon>
        <taxon>Cavia</taxon>
    </lineage>
</organism>